<keyword id="KW-0963">Cytoplasm</keyword>
<keyword id="KW-0238">DNA-binding</keyword>
<keyword id="KW-0677">Repeat</keyword>
<keyword id="KW-0804">Transcription</keyword>
<keyword id="KW-0805">Transcription regulation</keyword>
<gene>
    <name evidence="1" type="primary">mraZ</name>
    <name type="ordered locus">Sputcn32_0478</name>
</gene>
<name>MRAZ_SHEPC</name>
<organism>
    <name type="scientific">Shewanella putrefaciens (strain CN-32 / ATCC BAA-453)</name>
    <dbReference type="NCBI Taxonomy" id="319224"/>
    <lineage>
        <taxon>Bacteria</taxon>
        <taxon>Pseudomonadati</taxon>
        <taxon>Pseudomonadota</taxon>
        <taxon>Gammaproteobacteria</taxon>
        <taxon>Alteromonadales</taxon>
        <taxon>Shewanellaceae</taxon>
        <taxon>Shewanella</taxon>
    </lineage>
</organism>
<evidence type="ECO:0000255" key="1">
    <source>
        <dbReference type="HAMAP-Rule" id="MF_01008"/>
    </source>
</evidence>
<evidence type="ECO:0000255" key="2">
    <source>
        <dbReference type="PROSITE-ProRule" id="PRU01076"/>
    </source>
</evidence>
<protein>
    <recommendedName>
        <fullName>Transcriptional regulator MraZ</fullName>
    </recommendedName>
</protein>
<proteinExistence type="inferred from homology"/>
<feature type="chain" id="PRO_1000062934" description="Transcriptional regulator MraZ">
    <location>
        <begin position="1"/>
        <end position="152"/>
    </location>
</feature>
<feature type="domain" description="SpoVT-AbrB 1" evidence="2">
    <location>
        <begin position="5"/>
        <end position="52"/>
    </location>
</feature>
<feature type="domain" description="SpoVT-AbrB 2" evidence="2">
    <location>
        <begin position="81"/>
        <end position="124"/>
    </location>
</feature>
<reference key="1">
    <citation type="submission" date="2007-04" db="EMBL/GenBank/DDBJ databases">
        <title>Complete sequence of Shewanella putrefaciens CN-32.</title>
        <authorList>
            <consortium name="US DOE Joint Genome Institute"/>
            <person name="Copeland A."/>
            <person name="Lucas S."/>
            <person name="Lapidus A."/>
            <person name="Barry K."/>
            <person name="Detter J.C."/>
            <person name="Glavina del Rio T."/>
            <person name="Hammon N."/>
            <person name="Israni S."/>
            <person name="Dalin E."/>
            <person name="Tice H."/>
            <person name="Pitluck S."/>
            <person name="Chain P."/>
            <person name="Malfatti S."/>
            <person name="Shin M."/>
            <person name="Vergez L."/>
            <person name="Schmutz J."/>
            <person name="Larimer F."/>
            <person name="Land M."/>
            <person name="Hauser L."/>
            <person name="Kyrpides N."/>
            <person name="Mikhailova N."/>
            <person name="Romine M.F."/>
            <person name="Fredrickson J."/>
            <person name="Tiedje J."/>
            <person name="Richardson P."/>
        </authorList>
    </citation>
    <scope>NUCLEOTIDE SEQUENCE [LARGE SCALE GENOMIC DNA]</scope>
    <source>
        <strain>CN-32 / ATCC BAA-453</strain>
    </source>
</reference>
<sequence length="152" mass="17648">MFRGASAINLDTKGRIAIPVRYREPLQLEHQGRIVITVDIQSACLLLYPIHEWELIEAKLLKLSDTDKTQRSLKRLLLGYAHEVELDGNGRILLPPPLRQYANLDKRIMLVGQLNKFELWDEQAWLQQIDECQETIRSEELANNERLADFSL</sequence>
<comment type="subunit">
    <text evidence="1">Forms oligomers.</text>
</comment>
<comment type="subcellular location">
    <subcellularLocation>
        <location evidence="1">Cytoplasm</location>
        <location evidence="1">Nucleoid</location>
    </subcellularLocation>
</comment>
<comment type="similarity">
    <text evidence="1">Belongs to the MraZ family.</text>
</comment>
<dbReference type="EMBL" id="CP000681">
    <property type="protein sequence ID" value="ABP74210.1"/>
    <property type="molecule type" value="Genomic_DNA"/>
</dbReference>
<dbReference type="SMR" id="A4Y2M7"/>
<dbReference type="STRING" id="319224.Sputcn32_0478"/>
<dbReference type="KEGG" id="spc:Sputcn32_0478"/>
<dbReference type="eggNOG" id="COG2001">
    <property type="taxonomic scope" value="Bacteria"/>
</dbReference>
<dbReference type="HOGENOM" id="CLU_107907_2_0_6"/>
<dbReference type="GO" id="GO:0005737">
    <property type="term" value="C:cytoplasm"/>
    <property type="evidence" value="ECO:0007669"/>
    <property type="project" value="UniProtKB-UniRule"/>
</dbReference>
<dbReference type="GO" id="GO:0009295">
    <property type="term" value="C:nucleoid"/>
    <property type="evidence" value="ECO:0007669"/>
    <property type="project" value="UniProtKB-SubCell"/>
</dbReference>
<dbReference type="GO" id="GO:0003700">
    <property type="term" value="F:DNA-binding transcription factor activity"/>
    <property type="evidence" value="ECO:0007669"/>
    <property type="project" value="UniProtKB-UniRule"/>
</dbReference>
<dbReference type="GO" id="GO:0000976">
    <property type="term" value="F:transcription cis-regulatory region binding"/>
    <property type="evidence" value="ECO:0007669"/>
    <property type="project" value="TreeGrafter"/>
</dbReference>
<dbReference type="GO" id="GO:2000143">
    <property type="term" value="P:negative regulation of DNA-templated transcription initiation"/>
    <property type="evidence" value="ECO:0007669"/>
    <property type="project" value="TreeGrafter"/>
</dbReference>
<dbReference type="CDD" id="cd16321">
    <property type="entry name" value="MraZ_C"/>
    <property type="match status" value="1"/>
</dbReference>
<dbReference type="CDD" id="cd16320">
    <property type="entry name" value="MraZ_N"/>
    <property type="match status" value="1"/>
</dbReference>
<dbReference type="FunFam" id="3.40.1550.20:FF:000001">
    <property type="entry name" value="Transcriptional regulator MraZ"/>
    <property type="match status" value="1"/>
</dbReference>
<dbReference type="Gene3D" id="3.40.1550.20">
    <property type="entry name" value="Transcriptional regulator MraZ domain"/>
    <property type="match status" value="1"/>
</dbReference>
<dbReference type="HAMAP" id="MF_01008">
    <property type="entry name" value="MraZ"/>
    <property type="match status" value="1"/>
</dbReference>
<dbReference type="InterPro" id="IPR003444">
    <property type="entry name" value="MraZ"/>
</dbReference>
<dbReference type="InterPro" id="IPR035644">
    <property type="entry name" value="MraZ_C"/>
</dbReference>
<dbReference type="InterPro" id="IPR020603">
    <property type="entry name" value="MraZ_dom"/>
</dbReference>
<dbReference type="InterPro" id="IPR035642">
    <property type="entry name" value="MraZ_N"/>
</dbReference>
<dbReference type="InterPro" id="IPR038619">
    <property type="entry name" value="MraZ_sf"/>
</dbReference>
<dbReference type="InterPro" id="IPR007159">
    <property type="entry name" value="SpoVT-AbrB_dom"/>
</dbReference>
<dbReference type="InterPro" id="IPR037914">
    <property type="entry name" value="SpoVT-AbrB_sf"/>
</dbReference>
<dbReference type="NCBIfam" id="TIGR00242">
    <property type="entry name" value="division/cell wall cluster transcriptional repressor MraZ"/>
    <property type="match status" value="1"/>
</dbReference>
<dbReference type="PANTHER" id="PTHR34701">
    <property type="entry name" value="TRANSCRIPTIONAL REGULATOR MRAZ"/>
    <property type="match status" value="1"/>
</dbReference>
<dbReference type="PANTHER" id="PTHR34701:SF1">
    <property type="entry name" value="TRANSCRIPTIONAL REGULATOR MRAZ"/>
    <property type="match status" value="1"/>
</dbReference>
<dbReference type="Pfam" id="PF02381">
    <property type="entry name" value="MraZ"/>
    <property type="match status" value="2"/>
</dbReference>
<dbReference type="SUPFAM" id="SSF89447">
    <property type="entry name" value="AbrB/MazE/MraZ-like"/>
    <property type="match status" value="1"/>
</dbReference>
<dbReference type="PROSITE" id="PS51740">
    <property type="entry name" value="SPOVT_ABRB"/>
    <property type="match status" value="2"/>
</dbReference>
<accession>A4Y2M7</accession>